<proteinExistence type="evidence at protein level"/>
<sequence>MAKTLARSTASRITKRLISTSGATTPSPSYILSRRSTPVFSHAVGFISSLNRFTTIRTRMDRSGGSYSPLKSGSNFSDRAPTEMAPLFPGCDYEHWLIVMDKPGGENATKQQMIDCYVQTLAKIIGSEEEAKKKIYNVSCERYFGFGCEIDEETSNKLEGLPGVLFILPDSYVDQENKDYGAELFVNGEIVQRPPERQRKIIELTTQRTNDKPKYHDKTRYVRRRENMR</sequence>
<feature type="transit peptide" description="Chloroplast and mitochondrion" evidence="1">
    <location>
        <begin position="1"/>
        <end position="57"/>
    </location>
</feature>
<feature type="chain" id="PRO_0000432528" description="Multiple organellar RNA editing factor 5, chloroplastic/mitochondrial">
    <location>
        <begin position="58"/>
        <end position="229"/>
    </location>
</feature>
<gene>
    <name evidence="4" type="primary">MORF5</name>
    <name evidence="5" type="synonym">RIP5</name>
    <name evidence="7" type="ordered locus">At1g32580</name>
    <name evidence="8" type="ORF">T9G5.3</name>
</gene>
<comment type="function">
    <text evidence="2">Involved in organellar RNA editing. Required for the processing of few RNA editing sites in mitochondria.</text>
</comment>
<comment type="subunit">
    <text evidence="3">Homodimer and heterodimers with MORF8/RIP1, MORF3/RIP3, MORF6/RIP6, MORF7/RIP7 and MORF9/RIP9.</text>
</comment>
<comment type="subcellular location">
    <subcellularLocation>
        <location evidence="3">Mitochondrion</location>
    </subcellularLocation>
    <subcellularLocation>
        <location evidence="3">Plastid</location>
        <location evidence="3">Chloroplast</location>
    </subcellularLocation>
    <text evidence="3">Dual targeting to mitochondria and chloroplasts.</text>
</comment>
<comment type="disruption phenotype">
    <text evidence="2">No visible phenotype under normal growth conditions.</text>
</comment>
<comment type="similarity">
    <text>Belongs to the MORF family.</text>
</comment>
<name>MORF5_ARATH</name>
<evidence type="ECO:0000255" key="1"/>
<evidence type="ECO:0000269" key="2">
    <source>
    </source>
</evidence>
<evidence type="ECO:0000269" key="3">
    <source>
    </source>
</evidence>
<evidence type="ECO:0000303" key="4">
    <source>
    </source>
</evidence>
<evidence type="ECO:0000303" key="5">
    <source>
    </source>
</evidence>
<evidence type="ECO:0000305" key="6"/>
<evidence type="ECO:0000312" key="7">
    <source>
        <dbReference type="Araport" id="AT1G32580"/>
    </source>
</evidence>
<evidence type="ECO:0000312" key="8">
    <source>
        <dbReference type="EMBL" id="AAG51246.1"/>
    </source>
</evidence>
<reference key="1">
    <citation type="journal article" date="2000" name="Nature">
        <title>Sequence and analysis of chromosome 1 of the plant Arabidopsis thaliana.</title>
        <authorList>
            <person name="Theologis A."/>
            <person name="Ecker J.R."/>
            <person name="Palm C.J."/>
            <person name="Federspiel N.A."/>
            <person name="Kaul S."/>
            <person name="White O."/>
            <person name="Alonso J."/>
            <person name="Altafi H."/>
            <person name="Araujo R."/>
            <person name="Bowman C.L."/>
            <person name="Brooks S.Y."/>
            <person name="Buehler E."/>
            <person name="Chan A."/>
            <person name="Chao Q."/>
            <person name="Chen H."/>
            <person name="Cheuk R.F."/>
            <person name="Chin C.W."/>
            <person name="Chung M.K."/>
            <person name="Conn L."/>
            <person name="Conway A.B."/>
            <person name="Conway A.R."/>
            <person name="Creasy T.H."/>
            <person name="Dewar K."/>
            <person name="Dunn P."/>
            <person name="Etgu P."/>
            <person name="Feldblyum T.V."/>
            <person name="Feng J.-D."/>
            <person name="Fong B."/>
            <person name="Fujii C.Y."/>
            <person name="Gill J.E."/>
            <person name="Goldsmith A.D."/>
            <person name="Haas B."/>
            <person name="Hansen N.F."/>
            <person name="Hughes B."/>
            <person name="Huizar L."/>
            <person name="Hunter J.L."/>
            <person name="Jenkins J."/>
            <person name="Johnson-Hopson C."/>
            <person name="Khan S."/>
            <person name="Khaykin E."/>
            <person name="Kim C.J."/>
            <person name="Koo H.L."/>
            <person name="Kremenetskaia I."/>
            <person name="Kurtz D.B."/>
            <person name="Kwan A."/>
            <person name="Lam B."/>
            <person name="Langin-Hooper S."/>
            <person name="Lee A."/>
            <person name="Lee J.M."/>
            <person name="Lenz C.A."/>
            <person name="Li J.H."/>
            <person name="Li Y.-P."/>
            <person name="Lin X."/>
            <person name="Liu S.X."/>
            <person name="Liu Z.A."/>
            <person name="Luros J.S."/>
            <person name="Maiti R."/>
            <person name="Marziali A."/>
            <person name="Militscher J."/>
            <person name="Miranda M."/>
            <person name="Nguyen M."/>
            <person name="Nierman W.C."/>
            <person name="Osborne B.I."/>
            <person name="Pai G."/>
            <person name="Peterson J."/>
            <person name="Pham P.K."/>
            <person name="Rizzo M."/>
            <person name="Rooney T."/>
            <person name="Rowley D."/>
            <person name="Sakano H."/>
            <person name="Salzberg S.L."/>
            <person name="Schwartz J.R."/>
            <person name="Shinn P."/>
            <person name="Southwick A.M."/>
            <person name="Sun H."/>
            <person name="Tallon L.J."/>
            <person name="Tambunga G."/>
            <person name="Toriumi M.J."/>
            <person name="Town C.D."/>
            <person name="Utterback T."/>
            <person name="Van Aken S."/>
            <person name="Vaysberg M."/>
            <person name="Vysotskaia V.S."/>
            <person name="Walker M."/>
            <person name="Wu D."/>
            <person name="Yu G."/>
            <person name="Fraser C.M."/>
            <person name="Venter J.C."/>
            <person name="Davis R.W."/>
        </authorList>
    </citation>
    <scope>NUCLEOTIDE SEQUENCE [LARGE SCALE GENOMIC DNA]</scope>
    <source>
        <strain>cv. Columbia</strain>
    </source>
</reference>
<reference key="2">
    <citation type="journal article" date="2017" name="Plant J.">
        <title>Araport11: a complete reannotation of the Arabidopsis thaliana reference genome.</title>
        <authorList>
            <person name="Cheng C.Y."/>
            <person name="Krishnakumar V."/>
            <person name="Chan A.P."/>
            <person name="Thibaud-Nissen F."/>
            <person name="Schobel S."/>
            <person name="Town C.D."/>
        </authorList>
    </citation>
    <scope>GENOME REANNOTATION</scope>
    <source>
        <strain>cv. Columbia</strain>
    </source>
</reference>
<reference key="3">
    <citation type="journal article" date="2003" name="Science">
        <title>Empirical analysis of transcriptional activity in the Arabidopsis genome.</title>
        <authorList>
            <person name="Yamada K."/>
            <person name="Lim J."/>
            <person name="Dale J.M."/>
            <person name="Chen H."/>
            <person name="Shinn P."/>
            <person name="Palm C.J."/>
            <person name="Southwick A.M."/>
            <person name="Wu H.C."/>
            <person name="Kim C.J."/>
            <person name="Nguyen M."/>
            <person name="Pham P.K."/>
            <person name="Cheuk R.F."/>
            <person name="Karlin-Newmann G."/>
            <person name="Liu S.X."/>
            <person name="Lam B."/>
            <person name="Sakano H."/>
            <person name="Wu T."/>
            <person name="Yu G."/>
            <person name="Miranda M."/>
            <person name="Quach H.L."/>
            <person name="Tripp M."/>
            <person name="Chang C.H."/>
            <person name="Lee J.M."/>
            <person name="Toriumi M.J."/>
            <person name="Chan M.M."/>
            <person name="Tang C.C."/>
            <person name="Onodera C.S."/>
            <person name="Deng J.M."/>
            <person name="Akiyama K."/>
            <person name="Ansari Y."/>
            <person name="Arakawa T."/>
            <person name="Banh J."/>
            <person name="Banno F."/>
            <person name="Bowser L."/>
            <person name="Brooks S.Y."/>
            <person name="Carninci P."/>
            <person name="Chao Q."/>
            <person name="Choy N."/>
            <person name="Enju A."/>
            <person name="Goldsmith A.D."/>
            <person name="Gurjal M."/>
            <person name="Hansen N.F."/>
            <person name="Hayashizaki Y."/>
            <person name="Johnson-Hopson C."/>
            <person name="Hsuan V.W."/>
            <person name="Iida K."/>
            <person name="Karnes M."/>
            <person name="Khan S."/>
            <person name="Koesema E."/>
            <person name="Ishida J."/>
            <person name="Jiang P.X."/>
            <person name="Jones T."/>
            <person name="Kawai J."/>
            <person name="Kamiya A."/>
            <person name="Meyers C."/>
            <person name="Nakajima M."/>
            <person name="Narusaka M."/>
            <person name="Seki M."/>
            <person name="Sakurai T."/>
            <person name="Satou M."/>
            <person name="Tamse R."/>
            <person name="Vaysberg M."/>
            <person name="Wallender E.K."/>
            <person name="Wong C."/>
            <person name="Yamamura Y."/>
            <person name="Yuan S."/>
            <person name="Shinozaki K."/>
            <person name="Davis R.W."/>
            <person name="Theologis A."/>
            <person name="Ecker J.R."/>
        </authorList>
    </citation>
    <scope>NUCLEOTIDE SEQUENCE [LARGE SCALE MRNA]</scope>
    <source>
        <strain>cv. Columbia</strain>
    </source>
</reference>
<reference key="4">
    <citation type="journal article" date="2012" name="Proc. Natl. Acad. Sci. U.S.A.">
        <title>Multiple organellar RNA editing factor (MORF) family proteins are required for RNA editing in mitochondria and plastids of plants.</title>
        <authorList>
            <person name="Takenaka M."/>
            <person name="Zehrmann A."/>
            <person name="Verbitskiy D."/>
            <person name="Kugelmann M."/>
            <person name="Hartel B."/>
            <person name="Brennicke A."/>
        </authorList>
    </citation>
    <scope>GENE FAMILY</scope>
    <scope>NOMENCLATURE</scope>
</reference>
<reference key="5">
    <citation type="journal article" date="2013" name="PLoS Genet.">
        <title>Comprehensive high-resolution analysis of the role of an Arabidopsis gene family in RNA editing.</title>
        <authorList>
            <person name="Bentolila S."/>
            <person name="Oh J."/>
            <person name="Hanson M.R."/>
            <person name="Bukowski R."/>
        </authorList>
    </citation>
    <scope>FUNCTION</scope>
    <scope>GENE FAMILY</scope>
    <scope>DISRUPTION PHENOTYPE</scope>
</reference>
<reference key="6">
    <citation type="journal article" date="2015" name="J. Biol. Chem.">
        <title>Selective homo- and heteromer interactions between the multiple organellar RNA editing factor (MORF) proteins in Arabidopsis thaliana.</title>
        <authorList>
            <person name="Zehrmann A."/>
            <person name="Haertel B."/>
            <person name="Glass F."/>
            <person name="Bayer-Csaszar E."/>
            <person name="Obata T."/>
            <person name="Meyer E."/>
            <person name="Brennicke A."/>
            <person name="Takenaka M."/>
        </authorList>
    </citation>
    <scope>HOMODIMERIZATION</scope>
    <scope>INTERACTION WITH MORF8/RIP1; MORF3/RIP3; MORF6/RIP6; MORF7/RIP7 AND MORF9/RIP9</scope>
    <scope>SUBCELLULAR LOCATION</scope>
</reference>
<organism>
    <name type="scientific">Arabidopsis thaliana</name>
    <name type="common">Mouse-ear cress</name>
    <dbReference type="NCBI Taxonomy" id="3702"/>
    <lineage>
        <taxon>Eukaryota</taxon>
        <taxon>Viridiplantae</taxon>
        <taxon>Streptophyta</taxon>
        <taxon>Embryophyta</taxon>
        <taxon>Tracheophyta</taxon>
        <taxon>Spermatophyta</taxon>
        <taxon>Magnoliopsida</taxon>
        <taxon>eudicotyledons</taxon>
        <taxon>Gunneridae</taxon>
        <taxon>Pentapetalae</taxon>
        <taxon>rosids</taxon>
        <taxon>malvids</taxon>
        <taxon>Brassicales</taxon>
        <taxon>Brassicaceae</taxon>
        <taxon>Camelineae</taxon>
        <taxon>Arabidopsis</taxon>
    </lineage>
</organism>
<dbReference type="EMBL" id="AC055769">
    <property type="protein sequence ID" value="AAG51246.1"/>
    <property type="molecule type" value="Genomic_DNA"/>
</dbReference>
<dbReference type="EMBL" id="CP002684">
    <property type="protein sequence ID" value="AEE31506.1"/>
    <property type="molecule type" value="Genomic_DNA"/>
</dbReference>
<dbReference type="EMBL" id="AY063995">
    <property type="protein sequence ID" value="AAL36351.1"/>
    <property type="molecule type" value="mRNA"/>
</dbReference>
<dbReference type="EMBL" id="AY096695">
    <property type="protein sequence ID" value="AAM20329.1"/>
    <property type="molecule type" value="mRNA"/>
</dbReference>
<dbReference type="PIR" id="D86451">
    <property type="entry name" value="D86451"/>
</dbReference>
<dbReference type="RefSeq" id="NP_174536.1">
    <property type="nucleotide sequence ID" value="NM_102993.4"/>
</dbReference>
<dbReference type="SMR" id="Q9C7Y2"/>
<dbReference type="FunCoup" id="Q9C7Y2">
    <property type="interactions" value="115"/>
</dbReference>
<dbReference type="IntAct" id="Q9C7Y2">
    <property type="interactions" value="4"/>
</dbReference>
<dbReference type="STRING" id="3702.Q9C7Y2"/>
<dbReference type="PaxDb" id="3702-AT1G32580.1"/>
<dbReference type="ProteomicsDB" id="250937"/>
<dbReference type="EnsemblPlants" id="AT1G32580.1">
    <property type="protein sequence ID" value="AT1G32580.1"/>
    <property type="gene ID" value="AT1G32580"/>
</dbReference>
<dbReference type="GeneID" id="840152"/>
<dbReference type="Gramene" id="AT1G32580.1">
    <property type="protein sequence ID" value="AT1G32580.1"/>
    <property type="gene ID" value="AT1G32580"/>
</dbReference>
<dbReference type="KEGG" id="ath:AT1G32580"/>
<dbReference type="Araport" id="AT1G32580"/>
<dbReference type="TAIR" id="AT1G32580">
    <property type="gene designation" value="MORF5"/>
</dbReference>
<dbReference type="eggNOG" id="ENOG502QPXC">
    <property type="taxonomic scope" value="Eukaryota"/>
</dbReference>
<dbReference type="HOGENOM" id="CLU_073703_1_0_1"/>
<dbReference type="InParanoid" id="Q9C7Y2"/>
<dbReference type="OMA" id="APCFPRA"/>
<dbReference type="PhylomeDB" id="Q9C7Y2"/>
<dbReference type="CD-CODE" id="4299E36E">
    <property type="entry name" value="Nucleolus"/>
</dbReference>
<dbReference type="PRO" id="PR:Q9C7Y2"/>
<dbReference type="Proteomes" id="UP000006548">
    <property type="component" value="Chromosome 1"/>
</dbReference>
<dbReference type="ExpressionAtlas" id="Q9C7Y2">
    <property type="expression patterns" value="baseline and differential"/>
</dbReference>
<dbReference type="GO" id="GO:0009507">
    <property type="term" value="C:chloroplast"/>
    <property type="evidence" value="ECO:0007669"/>
    <property type="project" value="UniProtKB-SubCell"/>
</dbReference>
<dbReference type="GO" id="GO:0005739">
    <property type="term" value="C:mitochondrion"/>
    <property type="evidence" value="ECO:0000314"/>
    <property type="project" value="TAIR"/>
</dbReference>
<dbReference type="GO" id="GO:0005634">
    <property type="term" value="C:nucleus"/>
    <property type="evidence" value="ECO:0007005"/>
    <property type="project" value="TAIR"/>
</dbReference>
<dbReference type="GO" id="GO:0046983">
    <property type="term" value="F:protein dimerization activity"/>
    <property type="evidence" value="ECO:0000353"/>
    <property type="project" value="TAIR"/>
</dbReference>
<dbReference type="GO" id="GO:0042803">
    <property type="term" value="F:protein homodimerization activity"/>
    <property type="evidence" value="ECO:0000353"/>
    <property type="project" value="TAIR"/>
</dbReference>
<dbReference type="GO" id="GO:0016554">
    <property type="term" value="P:cytidine to uridine editing"/>
    <property type="evidence" value="ECO:0007669"/>
    <property type="project" value="InterPro"/>
</dbReference>
<dbReference type="GO" id="GO:0080156">
    <property type="term" value="P:mitochondrial mRNA modification"/>
    <property type="evidence" value="ECO:0000315"/>
    <property type="project" value="UniProtKB"/>
</dbReference>
<dbReference type="GO" id="GO:0006397">
    <property type="term" value="P:mRNA processing"/>
    <property type="evidence" value="ECO:0007669"/>
    <property type="project" value="UniProtKB-KW"/>
</dbReference>
<dbReference type="FunFam" id="3.30.70.80:FF:000001">
    <property type="entry name" value="Multiple organellar RNA editing factor"/>
    <property type="match status" value="1"/>
</dbReference>
<dbReference type="Gene3D" id="3.30.70.80">
    <property type="entry name" value="Peptidase S8 propeptide/proteinase inhibitor I9"/>
    <property type="match status" value="1"/>
</dbReference>
<dbReference type="InterPro" id="IPR039206">
    <property type="entry name" value="MORF/ORRM1/DAG-like"/>
</dbReference>
<dbReference type="InterPro" id="IPR054059">
    <property type="entry name" value="MORF/ORRM1/DAG-like_MORF"/>
</dbReference>
<dbReference type="InterPro" id="IPR037045">
    <property type="entry name" value="S8pro/Inhibitor_I9_sf"/>
</dbReference>
<dbReference type="PANTHER" id="PTHR31346:SF7">
    <property type="entry name" value="MULTIPLE ORGANELLAR RNA EDITING FACTOR 2, CHLOROPLASTIC-RELATED"/>
    <property type="match status" value="1"/>
</dbReference>
<dbReference type="PANTHER" id="PTHR31346">
    <property type="entry name" value="MULTIPLE ORGANELLAR RNA EDITING FACTOR 2, CHLOROPLASTIC-RELATED-RELATED"/>
    <property type="match status" value="1"/>
</dbReference>
<dbReference type="Pfam" id="PF21864">
    <property type="entry name" value="MORF_dom"/>
    <property type="match status" value="1"/>
</dbReference>
<protein>
    <recommendedName>
        <fullName evidence="6">Multiple organellar RNA editing factor 5, chloroplastic/mitochondrial</fullName>
    </recommendedName>
    <alternativeName>
        <fullName evidence="5">RNA editing-interacting protein 5</fullName>
    </alternativeName>
</protein>
<keyword id="KW-0150">Chloroplast</keyword>
<keyword id="KW-0496">Mitochondrion</keyword>
<keyword id="KW-0507">mRNA processing</keyword>
<keyword id="KW-0934">Plastid</keyword>
<keyword id="KW-1185">Reference proteome</keyword>
<keyword id="KW-0809">Transit peptide</keyword>
<accession>Q9C7Y2</accession>